<name>KPYK_NAUCA</name>
<sequence>MESRLARLTTLQVTAGDNLRRTSIIGTIGPKTNNPEVLVALRKAGLNIVRMNFSHGSYEYHQSVIENARKSEELYPGRPLAIALDTKGPEIRTGTTTGEVDYPIPPNHEMIFSTDEKYAKACDDKVMFVDYANITKVISKGKIIYVDDGVLSFEVLEVVDGKTLKVKSLNAGKICSHKGVNLPGTDVDLPALSEKDKADLRFGVKNGVHMVFASFIRTAQDVLTIREVLGEDGKDIKIVVKIENQQGVNNFDEILKVTDAVMVARGDLGIEIPAPEVLAVQKKLIAKSNLAGKPVICATQMLESMTYNPRPTRAEVSDVGNAILDGADCVMLSGETAKGNYPINAVTTMADTALIAEQAIAYQPLYDDLRNLTPKPTSTTETVAASAVAAVYEQKAKAIIVLSTSGTTPRLVSKYRPDCPIILVTRNPRAARFSHLSRGVFPFVYEADSVADWTEDVELRLKFGIEKAIEMGVMKKGDTYVSIQGFKAGEGHSNTLQVSNA</sequence>
<keyword id="KW-0067">ATP-binding</keyword>
<keyword id="KW-0324">Glycolysis</keyword>
<keyword id="KW-0418">Kinase</keyword>
<keyword id="KW-0460">Magnesium</keyword>
<keyword id="KW-0479">Metal-binding</keyword>
<keyword id="KW-0547">Nucleotide-binding</keyword>
<keyword id="KW-0630">Potassium</keyword>
<keyword id="KW-0670">Pyruvate</keyword>
<keyword id="KW-1185">Reference proteome</keyword>
<keyword id="KW-0808">Transferase</keyword>
<reference key="1">
    <citation type="journal article" date="2003" name="Nature">
        <title>Yeast genome duplication was followed by asynchronous differentiation of duplicated genes.</title>
        <authorList>
            <person name="Langkjaer R.B."/>
            <person name="Cliften P.F."/>
            <person name="Johnston M."/>
            <person name="Piskur J."/>
        </authorList>
    </citation>
    <scope>NUCLEOTIDE SEQUENCE [GENOMIC DNA]</scope>
    <source>
        <strain>ATCC 76901 / BCRC 22586 / CBS 4309 / NBRC 1992 / NRRL Y-12630</strain>
    </source>
</reference>
<reference key="2">
    <citation type="submission" date="2011-07" db="EMBL/GenBank/DDBJ databases">
        <title>Genome sequence of Naumovozyma castellii.</title>
        <authorList>
            <person name="Gordon J.L."/>
            <person name="Armisen D."/>
            <person name="Proux-Wera E."/>
            <person name="OhEigeartaigh S.S."/>
            <person name="Byrne K.P."/>
            <person name="Wolfe K.H."/>
        </authorList>
    </citation>
    <scope>NUCLEOTIDE SEQUENCE [LARGE SCALE GENOMIC DNA]</scope>
    <source>
        <strain>ATCC 76901 / BCRC 22586 / CBS 4309 / NBRC 1992 / NRRL Y-12630</strain>
    </source>
</reference>
<proteinExistence type="inferred from homology"/>
<accession>Q875Z9</accession>
<accession>G0V769</accession>
<dbReference type="EC" id="2.7.1.40"/>
<dbReference type="EMBL" id="AY144916">
    <property type="protein sequence ID" value="AAO32480.1"/>
    <property type="molecule type" value="Genomic_DNA"/>
</dbReference>
<dbReference type="EMBL" id="HE576752">
    <property type="protein sequence ID" value="CCC67317.1"/>
    <property type="molecule type" value="Genomic_DNA"/>
</dbReference>
<dbReference type="SMR" id="Q875Z9"/>
<dbReference type="FunCoup" id="Q875Z9">
    <property type="interactions" value="1069"/>
</dbReference>
<dbReference type="STRING" id="1064592.Q875Z9"/>
<dbReference type="KEGG" id="ncs:NCAS_0A07590"/>
<dbReference type="eggNOG" id="KOG2323">
    <property type="taxonomic scope" value="Eukaryota"/>
</dbReference>
<dbReference type="HOGENOM" id="CLU_015439_0_1_1"/>
<dbReference type="InParanoid" id="Q875Z9"/>
<dbReference type="OMA" id="RVHHIGE"/>
<dbReference type="OrthoDB" id="108365at2759"/>
<dbReference type="UniPathway" id="UPA00109">
    <property type="reaction ID" value="UER00188"/>
</dbReference>
<dbReference type="Proteomes" id="UP000001640">
    <property type="component" value="Chromosome 1"/>
</dbReference>
<dbReference type="GO" id="GO:0005737">
    <property type="term" value="C:cytoplasm"/>
    <property type="evidence" value="ECO:0007669"/>
    <property type="project" value="EnsemblFungi"/>
</dbReference>
<dbReference type="GO" id="GO:0005524">
    <property type="term" value="F:ATP binding"/>
    <property type="evidence" value="ECO:0007669"/>
    <property type="project" value="UniProtKB-KW"/>
</dbReference>
<dbReference type="GO" id="GO:0016301">
    <property type="term" value="F:kinase activity"/>
    <property type="evidence" value="ECO:0007669"/>
    <property type="project" value="UniProtKB-KW"/>
</dbReference>
<dbReference type="GO" id="GO:0000287">
    <property type="term" value="F:magnesium ion binding"/>
    <property type="evidence" value="ECO:0007669"/>
    <property type="project" value="InterPro"/>
</dbReference>
<dbReference type="GO" id="GO:0030955">
    <property type="term" value="F:potassium ion binding"/>
    <property type="evidence" value="ECO:0007669"/>
    <property type="project" value="InterPro"/>
</dbReference>
<dbReference type="GO" id="GO:0004743">
    <property type="term" value="F:pyruvate kinase activity"/>
    <property type="evidence" value="ECO:0007669"/>
    <property type="project" value="UniProtKB-EC"/>
</dbReference>
<dbReference type="CDD" id="cd00288">
    <property type="entry name" value="Pyruvate_Kinase"/>
    <property type="match status" value="1"/>
</dbReference>
<dbReference type="FunFam" id="2.40.33.10:FF:000001">
    <property type="entry name" value="Pyruvate kinase"/>
    <property type="match status" value="1"/>
</dbReference>
<dbReference type="FunFam" id="3.20.20.60:FF:000025">
    <property type="entry name" value="Pyruvate kinase"/>
    <property type="match status" value="1"/>
</dbReference>
<dbReference type="FunFam" id="3.40.1380.20:FF:000001">
    <property type="entry name" value="Pyruvate kinase"/>
    <property type="match status" value="1"/>
</dbReference>
<dbReference type="Gene3D" id="3.20.20.60">
    <property type="entry name" value="Phosphoenolpyruvate-binding domains"/>
    <property type="match status" value="1"/>
</dbReference>
<dbReference type="Gene3D" id="2.40.33.10">
    <property type="entry name" value="PK beta-barrel domain-like"/>
    <property type="match status" value="1"/>
</dbReference>
<dbReference type="Gene3D" id="3.40.1380.20">
    <property type="entry name" value="Pyruvate kinase, C-terminal domain"/>
    <property type="match status" value="1"/>
</dbReference>
<dbReference type="InterPro" id="IPR001697">
    <property type="entry name" value="Pyr_Knase"/>
</dbReference>
<dbReference type="InterPro" id="IPR015813">
    <property type="entry name" value="Pyrv/PenolPyrv_kinase-like_dom"/>
</dbReference>
<dbReference type="InterPro" id="IPR040442">
    <property type="entry name" value="Pyrv_kinase-like_dom_sf"/>
</dbReference>
<dbReference type="InterPro" id="IPR011037">
    <property type="entry name" value="Pyrv_Knase-like_insert_dom_sf"/>
</dbReference>
<dbReference type="InterPro" id="IPR018209">
    <property type="entry name" value="Pyrv_Knase_AS"/>
</dbReference>
<dbReference type="InterPro" id="IPR015793">
    <property type="entry name" value="Pyrv_Knase_brl"/>
</dbReference>
<dbReference type="InterPro" id="IPR015795">
    <property type="entry name" value="Pyrv_Knase_C"/>
</dbReference>
<dbReference type="InterPro" id="IPR036918">
    <property type="entry name" value="Pyrv_Knase_C_sf"/>
</dbReference>
<dbReference type="InterPro" id="IPR015806">
    <property type="entry name" value="Pyrv_Knase_insert_dom_sf"/>
</dbReference>
<dbReference type="NCBIfam" id="NF004491">
    <property type="entry name" value="PRK05826.1"/>
    <property type="match status" value="1"/>
</dbReference>
<dbReference type="NCBIfam" id="NF004978">
    <property type="entry name" value="PRK06354.1"/>
    <property type="match status" value="1"/>
</dbReference>
<dbReference type="NCBIfam" id="TIGR01064">
    <property type="entry name" value="pyruv_kin"/>
    <property type="match status" value="1"/>
</dbReference>
<dbReference type="PANTHER" id="PTHR11817">
    <property type="entry name" value="PYRUVATE KINASE"/>
    <property type="match status" value="1"/>
</dbReference>
<dbReference type="Pfam" id="PF00224">
    <property type="entry name" value="PK"/>
    <property type="match status" value="1"/>
</dbReference>
<dbReference type="Pfam" id="PF02887">
    <property type="entry name" value="PK_C"/>
    <property type="match status" value="1"/>
</dbReference>
<dbReference type="PRINTS" id="PR01050">
    <property type="entry name" value="PYRUVTKNASE"/>
</dbReference>
<dbReference type="SUPFAM" id="SSF51621">
    <property type="entry name" value="Phosphoenolpyruvate/pyruvate domain"/>
    <property type="match status" value="1"/>
</dbReference>
<dbReference type="SUPFAM" id="SSF50800">
    <property type="entry name" value="PK beta-barrel domain-like"/>
    <property type="match status" value="1"/>
</dbReference>
<dbReference type="SUPFAM" id="SSF52935">
    <property type="entry name" value="PK C-terminal domain-like"/>
    <property type="match status" value="1"/>
</dbReference>
<dbReference type="PROSITE" id="PS00110">
    <property type="entry name" value="PYRUVATE_KINASE"/>
    <property type="match status" value="1"/>
</dbReference>
<protein>
    <recommendedName>
        <fullName>Pyruvate kinase</fullName>
        <shortName>PK</shortName>
        <ecNumber>2.7.1.40</ecNumber>
    </recommendedName>
</protein>
<gene>
    <name type="primary">PYK1</name>
    <name type="synonym">CDC19</name>
    <name type="ordered locus">NCAS_0A07590</name>
</gene>
<feature type="chain" id="PRO_0000112116" description="Pyruvate kinase">
    <location>
        <begin position="1"/>
        <end position="501"/>
    </location>
</feature>
<feature type="binding site" evidence="1">
    <location>
        <position position="50"/>
    </location>
    <ligand>
        <name>substrate</name>
    </ligand>
</feature>
<feature type="binding site" evidence="2">
    <location>
        <begin position="52"/>
        <end position="55"/>
    </location>
    <ligand>
        <name>ATP</name>
        <dbReference type="ChEBI" id="CHEBI:30616"/>
    </ligand>
</feature>
<feature type="binding site" evidence="1">
    <location>
        <position position="52"/>
    </location>
    <ligand>
        <name>K(+)</name>
        <dbReference type="ChEBI" id="CHEBI:29103"/>
    </ligand>
</feature>
<feature type="binding site" evidence="1">
    <location>
        <position position="54"/>
    </location>
    <ligand>
        <name>K(+)</name>
        <dbReference type="ChEBI" id="CHEBI:29103"/>
    </ligand>
</feature>
<feature type="binding site" evidence="1">
    <location>
        <position position="85"/>
    </location>
    <ligand>
        <name>K(+)</name>
        <dbReference type="ChEBI" id="CHEBI:29103"/>
    </ligand>
</feature>
<feature type="binding site" evidence="1">
    <location>
        <position position="86"/>
    </location>
    <ligand>
        <name>K(+)</name>
        <dbReference type="ChEBI" id="CHEBI:29103"/>
    </ligand>
</feature>
<feature type="binding site" evidence="2">
    <location>
        <position position="92"/>
    </location>
    <ligand>
        <name>ATP</name>
        <dbReference type="ChEBI" id="CHEBI:30616"/>
    </ligand>
</feature>
<feature type="binding site" evidence="2">
    <location>
        <position position="178"/>
    </location>
    <ligand>
        <name>ATP</name>
        <dbReference type="ChEBI" id="CHEBI:30616"/>
    </ligand>
</feature>
<feature type="binding site" evidence="3">
    <location>
        <position position="243"/>
    </location>
    <ligand>
        <name>Mg(2+)</name>
        <dbReference type="ChEBI" id="CHEBI:18420"/>
    </ligand>
</feature>
<feature type="binding site" evidence="1">
    <location>
        <position position="266"/>
    </location>
    <ligand>
        <name>substrate</name>
    </ligand>
</feature>
<feature type="binding site" evidence="1">
    <location>
        <position position="267"/>
    </location>
    <ligand>
        <name>Mg(2+)</name>
        <dbReference type="ChEBI" id="CHEBI:18420"/>
    </ligand>
</feature>
<feature type="binding site" evidence="1">
    <location>
        <position position="267"/>
    </location>
    <ligand>
        <name>substrate</name>
    </ligand>
</feature>
<feature type="binding site" evidence="1">
    <location>
        <position position="299"/>
    </location>
    <ligand>
        <name>substrate</name>
    </ligand>
</feature>
<feature type="site" description="Transition state stabilizer" evidence="1">
    <location>
        <position position="241"/>
    </location>
</feature>
<evidence type="ECO:0000250" key="1"/>
<evidence type="ECO:0000250" key="2">
    <source>
        <dbReference type="UniProtKB" id="P14618"/>
    </source>
</evidence>
<evidence type="ECO:0000255" key="3"/>
<evidence type="ECO:0000305" key="4"/>
<comment type="catalytic activity">
    <reaction>
        <text>pyruvate + ATP = phosphoenolpyruvate + ADP + H(+)</text>
        <dbReference type="Rhea" id="RHEA:18157"/>
        <dbReference type="ChEBI" id="CHEBI:15361"/>
        <dbReference type="ChEBI" id="CHEBI:15378"/>
        <dbReference type="ChEBI" id="CHEBI:30616"/>
        <dbReference type="ChEBI" id="CHEBI:58702"/>
        <dbReference type="ChEBI" id="CHEBI:456216"/>
        <dbReference type="EC" id="2.7.1.40"/>
    </reaction>
</comment>
<comment type="cofactor">
    <cofactor evidence="1">
        <name>Mg(2+)</name>
        <dbReference type="ChEBI" id="CHEBI:18420"/>
    </cofactor>
</comment>
<comment type="cofactor">
    <cofactor evidence="1">
        <name>K(+)</name>
        <dbReference type="ChEBI" id="CHEBI:29103"/>
    </cofactor>
</comment>
<comment type="pathway">
    <text>Carbohydrate degradation; glycolysis; pyruvate from D-glyceraldehyde 3-phosphate: step 5/5.</text>
</comment>
<comment type="subunit">
    <text evidence="1">Homotetramer.</text>
</comment>
<comment type="similarity">
    <text evidence="4">Belongs to the pyruvate kinase family.</text>
</comment>
<organism>
    <name type="scientific">Naumovozyma castellii</name>
    <name type="common">Yeast</name>
    <name type="synonym">Saccharomyces castellii</name>
    <dbReference type="NCBI Taxonomy" id="27288"/>
    <lineage>
        <taxon>Eukaryota</taxon>
        <taxon>Fungi</taxon>
        <taxon>Dikarya</taxon>
        <taxon>Ascomycota</taxon>
        <taxon>Saccharomycotina</taxon>
        <taxon>Saccharomycetes</taxon>
        <taxon>Saccharomycetales</taxon>
        <taxon>Saccharomycetaceae</taxon>
        <taxon>Naumovozyma</taxon>
    </lineage>
</organism>